<feature type="chain" id="PRO_1000205751" description="Small ribosomal subunit protein bS16">
    <location>
        <begin position="1"/>
        <end position="157"/>
    </location>
</feature>
<feature type="region of interest" description="Disordered" evidence="2">
    <location>
        <begin position="125"/>
        <end position="157"/>
    </location>
</feature>
<feature type="compositionally biased region" description="Basic and acidic residues" evidence="2">
    <location>
        <begin position="125"/>
        <end position="141"/>
    </location>
</feature>
<feature type="compositionally biased region" description="Acidic residues" evidence="2">
    <location>
        <begin position="142"/>
        <end position="157"/>
    </location>
</feature>
<name>RS16_CORK4</name>
<evidence type="ECO:0000255" key="1">
    <source>
        <dbReference type="HAMAP-Rule" id="MF_00385"/>
    </source>
</evidence>
<evidence type="ECO:0000256" key="2">
    <source>
        <dbReference type="SAM" id="MobiDB-lite"/>
    </source>
</evidence>
<evidence type="ECO:0000305" key="3"/>
<protein>
    <recommendedName>
        <fullName evidence="1">Small ribosomal subunit protein bS16</fullName>
    </recommendedName>
    <alternativeName>
        <fullName evidence="3">30S ribosomal protein S16</fullName>
    </alternativeName>
</protein>
<organism>
    <name type="scientific">Corynebacterium kroppenstedtii (strain DSM 44385 / JCM 11950 / CIP 105744 / CCUG 35717)</name>
    <dbReference type="NCBI Taxonomy" id="645127"/>
    <lineage>
        <taxon>Bacteria</taxon>
        <taxon>Bacillati</taxon>
        <taxon>Actinomycetota</taxon>
        <taxon>Actinomycetes</taxon>
        <taxon>Mycobacteriales</taxon>
        <taxon>Corynebacteriaceae</taxon>
        <taxon>Corynebacterium</taxon>
    </lineage>
</organism>
<dbReference type="EMBL" id="CP001620">
    <property type="protein sequence ID" value="ACR17929.1"/>
    <property type="molecule type" value="Genomic_DNA"/>
</dbReference>
<dbReference type="RefSeq" id="WP_012731816.1">
    <property type="nucleotide sequence ID" value="NC_012704.1"/>
</dbReference>
<dbReference type="SMR" id="C4LJC4"/>
<dbReference type="STRING" id="645127.ckrop_1184"/>
<dbReference type="KEGG" id="ckp:ckrop_1184"/>
<dbReference type="eggNOG" id="COG0228">
    <property type="taxonomic scope" value="Bacteria"/>
</dbReference>
<dbReference type="HOGENOM" id="CLU_100590_1_1_11"/>
<dbReference type="OrthoDB" id="9807878at2"/>
<dbReference type="Proteomes" id="UP000001473">
    <property type="component" value="Chromosome"/>
</dbReference>
<dbReference type="GO" id="GO:0005737">
    <property type="term" value="C:cytoplasm"/>
    <property type="evidence" value="ECO:0007669"/>
    <property type="project" value="UniProtKB-ARBA"/>
</dbReference>
<dbReference type="GO" id="GO:0015935">
    <property type="term" value="C:small ribosomal subunit"/>
    <property type="evidence" value="ECO:0007669"/>
    <property type="project" value="TreeGrafter"/>
</dbReference>
<dbReference type="GO" id="GO:0003735">
    <property type="term" value="F:structural constituent of ribosome"/>
    <property type="evidence" value="ECO:0007669"/>
    <property type="project" value="InterPro"/>
</dbReference>
<dbReference type="GO" id="GO:0006412">
    <property type="term" value="P:translation"/>
    <property type="evidence" value="ECO:0007669"/>
    <property type="project" value="UniProtKB-UniRule"/>
</dbReference>
<dbReference type="Gene3D" id="3.30.1320.10">
    <property type="match status" value="1"/>
</dbReference>
<dbReference type="HAMAP" id="MF_00385">
    <property type="entry name" value="Ribosomal_bS16"/>
    <property type="match status" value="1"/>
</dbReference>
<dbReference type="InterPro" id="IPR000307">
    <property type="entry name" value="Ribosomal_bS16"/>
</dbReference>
<dbReference type="InterPro" id="IPR023803">
    <property type="entry name" value="Ribosomal_bS16_dom_sf"/>
</dbReference>
<dbReference type="NCBIfam" id="NF011093">
    <property type="entry name" value="PRK14520.1"/>
    <property type="match status" value="1"/>
</dbReference>
<dbReference type="NCBIfam" id="TIGR00002">
    <property type="entry name" value="S16"/>
    <property type="match status" value="1"/>
</dbReference>
<dbReference type="PANTHER" id="PTHR12919">
    <property type="entry name" value="30S RIBOSOMAL PROTEIN S16"/>
    <property type="match status" value="1"/>
</dbReference>
<dbReference type="PANTHER" id="PTHR12919:SF20">
    <property type="entry name" value="SMALL RIBOSOMAL SUBUNIT PROTEIN BS16M"/>
    <property type="match status" value="1"/>
</dbReference>
<dbReference type="Pfam" id="PF00886">
    <property type="entry name" value="Ribosomal_S16"/>
    <property type="match status" value="1"/>
</dbReference>
<dbReference type="SUPFAM" id="SSF54565">
    <property type="entry name" value="Ribosomal protein S16"/>
    <property type="match status" value="1"/>
</dbReference>
<proteinExistence type="inferred from homology"/>
<sequence>MAVKIKLQRLGKIRTPHYRVIVADSRTRRSGRAIENLGIYEPKADPSVIRIDSDRVQYWLGVGAQPTEPVLALLKVTGDWQKFKGLPGAEGTLKAQPEKKSKLDLFNEALAEANNGPTLEAITEKRKAAKKAAEEAAAKEAEAEEAAEDKAEEESAE</sequence>
<accession>C4LJC4</accession>
<reference key="1">
    <citation type="journal article" date="2008" name="J. Biotechnol.">
        <title>Ultrafast pyrosequencing of Corynebacterium kroppenstedtii DSM44385 revealed insights into the physiology of a lipophilic corynebacterium that lacks mycolic acids.</title>
        <authorList>
            <person name="Tauch A."/>
            <person name="Schneider J."/>
            <person name="Szczepanowski R."/>
            <person name="Tilker A."/>
            <person name="Viehoever P."/>
            <person name="Gartemann K.-H."/>
            <person name="Arnold W."/>
            <person name="Blom J."/>
            <person name="Brinkrolf K."/>
            <person name="Brune I."/>
            <person name="Goetker S."/>
            <person name="Weisshaar B."/>
            <person name="Goesmann A."/>
            <person name="Droege M."/>
            <person name="Puehler A."/>
        </authorList>
    </citation>
    <scope>NUCLEOTIDE SEQUENCE [LARGE SCALE GENOMIC DNA]</scope>
    <source>
        <strain>DSM 44385 / JCM 11950 / CIP 105744 / CCUG 35717</strain>
    </source>
</reference>
<keyword id="KW-1185">Reference proteome</keyword>
<keyword id="KW-0687">Ribonucleoprotein</keyword>
<keyword id="KW-0689">Ribosomal protein</keyword>
<gene>
    <name evidence="1" type="primary">rpsP</name>
    <name type="ordered locus">ckrop_1184</name>
</gene>
<comment type="similarity">
    <text evidence="1">Belongs to the bacterial ribosomal protein bS16 family.</text>
</comment>